<evidence type="ECO:0000255" key="1">
    <source>
        <dbReference type="HAMAP-Rule" id="MF_01020"/>
    </source>
</evidence>
<reference key="1">
    <citation type="submission" date="2006-12" db="EMBL/GenBank/DDBJ databases">
        <title>Complete sequence of Mycobacterium vanbaalenii PYR-1.</title>
        <authorList>
            <consortium name="US DOE Joint Genome Institute"/>
            <person name="Copeland A."/>
            <person name="Lucas S."/>
            <person name="Lapidus A."/>
            <person name="Barry K."/>
            <person name="Detter J.C."/>
            <person name="Glavina del Rio T."/>
            <person name="Hammon N."/>
            <person name="Israni S."/>
            <person name="Dalin E."/>
            <person name="Tice H."/>
            <person name="Pitluck S."/>
            <person name="Singan V."/>
            <person name="Schmutz J."/>
            <person name="Larimer F."/>
            <person name="Land M."/>
            <person name="Hauser L."/>
            <person name="Kyrpides N."/>
            <person name="Anderson I.J."/>
            <person name="Miller C."/>
            <person name="Richardson P."/>
        </authorList>
    </citation>
    <scope>NUCLEOTIDE SEQUENCE [LARGE SCALE GENOMIC DNA]</scope>
    <source>
        <strain>DSM 7251 / JCM 13017 / BCRC 16820 / KCTC 9966 / NRRL B-24157 / PYR-1</strain>
    </source>
</reference>
<gene>
    <name evidence="1" type="primary">hisE</name>
    <name type="ordered locus">Mvan_3471</name>
</gene>
<protein>
    <recommendedName>
        <fullName evidence="1">Phosphoribosyl-ATP pyrophosphatase</fullName>
        <shortName evidence="1">PRA-PH</shortName>
        <ecNumber evidence="1">3.6.1.31</ecNumber>
    </recommendedName>
</protein>
<organism>
    <name type="scientific">Mycolicibacterium vanbaalenii (strain DSM 7251 / JCM 13017 / BCRC 16820 / KCTC 9966 / NRRL B-24157 / PYR-1)</name>
    <name type="common">Mycobacterium vanbaalenii</name>
    <dbReference type="NCBI Taxonomy" id="350058"/>
    <lineage>
        <taxon>Bacteria</taxon>
        <taxon>Bacillati</taxon>
        <taxon>Actinomycetota</taxon>
        <taxon>Actinomycetes</taxon>
        <taxon>Mycobacteriales</taxon>
        <taxon>Mycobacteriaceae</taxon>
        <taxon>Mycolicibacterium</taxon>
    </lineage>
</organism>
<accession>A1TAR6</accession>
<sequence>MTQSPNVKTFDALFAELSERARTRPAGSGTVAALDGGVHGIGKKILEEAGEVWLAAEHESDEALAEEISQLLYWTQVLMLSRGLSLDDVYGKL</sequence>
<name>HIS2_MYCVP</name>
<keyword id="KW-0028">Amino-acid biosynthesis</keyword>
<keyword id="KW-0067">ATP-binding</keyword>
<keyword id="KW-0963">Cytoplasm</keyword>
<keyword id="KW-0368">Histidine biosynthesis</keyword>
<keyword id="KW-0378">Hydrolase</keyword>
<keyword id="KW-0547">Nucleotide-binding</keyword>
<dbReference type="EC" id="3.6.1.31" evidence="1"/>
<dbReference type="EMBL" id="CP000511">
    <property type="protein sequence ID" value="ABM14266.1"/>
    <property type="molecule type" value="Genomic_DNA"/>
</dbReference>
<dbReference type="RefSeq" id="WP_011780670.1">
    <property type="nucleotide sequence ID" value="NZ_JACKSD010000223.1"/>
</dbReference>
<dbReference type="SMR" id="A1TAR6"/>
<dbReference type="STRING" id="350058.Mvan_3471"/>
<dbReference type="KEGG" id="mva:Mvan_3471"/>
<dbReference type="eggNOG" id="COG0140">
    <property type="taxonomic scope" value="Bacteria"/>
</dbReference>
<dbReference type="HOGENOM" id="CLU_123337_2_0_11"/>
<dbReference type="UniPathway" id="UPA00031">
    <property type="reaction ID" value="UER00007"/>
</dbReference>
<dbReference type="Proteomes" id="UP000009159">
    <property type="component" value="Chromosome"/>
</dbReference>
<dbReference type="GO" id="GO:0005737">
    <property type="term" value="C:cytoplasm"/>
    <property type="evidence" value="ECO:0007669"/>
    <property type="project" value="UniProtKB-SubCell"/>
</dbReference>
<dbReference type="GO" id="GO:0005524">
    <property type="term" value="F:ATP binding"/>
    <property type="evidence" value="ECO:0007669"/>
    <property type="project" value="UniProtKB-KW"/>
</dbReference>
<dbReference type="GO" id="GO:0004636">
    <property type="term" value="F:phosphoribosyl-ATP diphosphatase activity"/>
    <property type="evidence" value="ECO:0007669"/>
    <property type="project" value="UniProtKB-UniRule"/>
</dbReference>
<dbReference type="GO" id="GO:0000105">
    <property type="term" value="P:L-histidine biosynthetic process"/>
    <property type="evidence" value="ECO:0007669"/>
    <property type="project" value="UniProtKB-UniRule"/>
</dbReference>
<dbReference type="CDD" id="cd11547">
    <property type="entry name" value="NTP-PPase_HisE"/>
    <property type="match status" value="1"/>
</dbReference>
<dbReference type="Gene3D" id="1.10.287.1080">
    <property type="entry name" value="MazG-like"/>
    <property type="match status" value="1"/>
</dbReference>
<dbReference type="HAMAP" id="MF_01020">
    <property type="entry name" value="HisE"/>
    <property type="match status" value="1"/>
</dbReference>
<dbReference type="InterPro" id="IPR008179">
    <property type="entry name" value="HisE"/>
</dbReference>
<dbReference type="InterPro" id="IPR021130">
    <property type="entry name" value="PRib-ATP_PPHydrolase-like"/>
</dbReference>
<dbReference type="NCBIfam" id="TIGR03188">
    <property type="entry name" value="histidine_hisI"/>
    <property type="match status" value="1"/>
</dbReference>
<dbReference type="NCBIfam" id="NF001610">
    <property type="entry name" value="PRK00400.1-1"/>
    <property type="match status" value="1"/>
</dbReference>
<dbReference type="PANTHER" id="PTHR42945">
    <property type="entry name" value="HISTIDINE BIOSYNTHESIS BIFUNCTIONAL PROTEIN"/>
    <property type="match status" value="1"/>
</dbReference>
<dbReference type="PANTHER" id="PTHR42945:SF1">
    <property type="entry name" value="HISTIDINE BIOSYNTHESIS BIFUNCTIONAL PROTEIN HIS7"/>
    <property type="match status" value="1"/>
</dbReference>
<dbReference type="Pfam" id="PF01503">
    <property type="entry name" value="PRA-PH"/>
    <property type="match status" value="1"/>
</dbReference>
<dbReference type="SUPFAM" id="SSF101386">
    <property type="entry name" value="all-alpha NTP pyrophosphatases"/>
    <property type="match status" value="1"/>
</dbReference>
<feature type="chain" id="PRO_1000063362" description="Phosphoribosyl-ATP pyrophosphatase">
    <location>
        <begin position="1"/>
        <end position="93"/>
    </location>
</feature>
<proteinExistence type="inferred from homology"/>
<comment type="catalytic activity">
    <reaction evidence="1">
        <text>1-(5-phospho-beta-D-ribosyl)-ATP + H2O = 1-(5-phospho-beta-D-ribosyl)-5'-AMP + diphosphate + H(+)</text>
        <dbReference type="Rhea" id="RHEA:22828"/>
        <dbReference type="ChEBI" id="CHEBI:15377"/>
        <dbReference type="ChEBI" id="CHEBI:15378"/>
        <dbReference type="ChEBI" id="CHEBI:33019"/>
        <dbReference type="ChEBI" id="CHEBI:59457"/>
        <dbReference type="ChEBI" id="CHEBI:73183"/>
        <dbReference type="EC" id="3.6.1.31"/>
    </reaction>
</comment>
<comment type="pathway">
    <text evidence="1">Amino-acid biosynthesis; L-histidine biosynthesis; L-histidine from 5-phospho-alpha-D-ribose 1-diphosphate: step 2/9.</text>
</comment>
<comment type="subcellular location">
    <subcellularLocation>
        <location evidence="1">Cytoplasm</location>
    </subcellularLocation>
</comment>
<comment type="similarity">
    <text evidence="1">Belongs to the PRA-PH family.</text>
</comment>